<dbReference type="EC" id="1.4.3.5" evidence="1"/>
<dbReference type="EMBL" id="CP000800">
    <property type="protein sequence ID" value="ABV21134.1"/>
    <property type="molecule type" value="Genomic_DNA"/>
</dbReference>
<dbReference type="RefSeq" id="WP_001282311.1">
    <property type="nucleotide sequence ID" value="NC_009801.1"/>
</dbReference>
<dbReference type="SMR" id="A7ZMA0"/>
<dbReference type="GeneID" id="75204483"/>
<dbReference type="KEGG" id="ecw:EcE24377A_1848"/>
<dbReference type="HOGENOM" id="CLU_032263_2_2_6"/>
<dbReference type="UniPathway" id="UPA01068">
    <property type="reaction ID" value="UER00304"/>
</dbReference>
<dbReference type="UniPathway" id="UPA01068">
    <property type="reaction ID" value="UER00305"/>
</dbReference>
<dbReference type="Proteomes" id="UP000001122">
    <property type="component" value="Chromosome"/>
</dbReference>
<dbReference type="GO" id="GO:0010181">
    <property type="term" value="F:FMN binding"/>
    <property type="evidence" value="ECO:0007669"/>
    <property type="project" value="UniProtKB-UniRule"/>
</dbReference>
<dbReference type="GO" id="GO:0004733">
    <property type="term" value="F:pyridoxamine phosphate oxidase activity"/>
    <property type="evidence" value="ECO:0007669"/>
    <property type="project" value="UniProtKB-UniRule"/>
</dbReference>
<dbReference type="GO" id="GO:0008615">
    <property type="term" value="P:pyridoxine biosynthetic process"/>
    <property type="evidence" value="ECO:0007669"/>
    <property type="project" value="UniProtKB-KW"/>
</dbReference>
<dbReference type="FunFam" id="2.30.110.10:FF:000001">
    <property type="entry name" value="Pyridoxine/pyridoxamine 5'-phosphate oxidase"/>
    <property type="match status" value="1"/>
</dbReference>
<dbReference type="Gene3D" id="2.30.110.10">
    <property type="entry name" value="Electron Transport, Fmn-binding Protein, Chain A"/>
    <property type="match status" value="1"/>
</dbReference>
<dbReference type="HAMAP" id="MF_01629">
    <property type="entry name" value="PdxH"/>
    <property type="match status" value="1"/>
</dbReference>
<dbReference type="InterPro" id="IPR000659">
    <property type="entry name" value="Pyridox_Oxase"/>
</dbReference>
<dbReference type="InterPro" id="IPR019740">
    <property type="entry name" value="Pyridox_Oxase_CS"/>
</dbReference>
<dbReference type="InterPro" id="IPR011576">
    <property type="entry name" value="Pyridox_Oxase_N"/>
</dbReference>
<dbReference type="InterPro" id="IPR019576">
    <property type="entry name" value="Pyridoxamine_oxidase_dimer_C"/>
</dbReference>
<dbReference type="InterPro" id="IPR012349">
    <property type="entry name" value="Split_barrel_FMN-bd"/>
</dbReference>
<dbReference type="NCBIfam" id="TIGR00558">
    <property type="entry name" value="pdxH"/>
    <property type="match status" value="1"/>
</dbReference>
<dbReference type="NCBIfam" id="NF004231">
    <property type="entry name" value="PRK05679.1"/>
    <property type="match status" value="1"/>
</dbReference>
<dbReference type="PANTHER" id="PTHR10851:SF0">
    <property type="entry name" value="PYRIDOXINE-5'-PHOSPHATE OXIDASE"/>
    <property type="match status" value="1"/>
</dbReference>
<dbReference type="PANTHER" id="PTHR10851">
    <property type="entry name" value="PYRIDOXINE-5-PHOSPHATE OXIDASE"/>
    <property type="match status" value="1"/>
</dbReference>
<dbReference type="Pfam" id="PF10590">
    <property type="entry name" value="PNP_phzG_C"/>
    <property type="match status" value="1"/>
</dbReference>
<dbReference type="Pfam" id="PF01243">
    <property type="entry name" value="PNPOx_N"/>
    <property type="match status" value="1"/>
</dbReference>
<dbReference type="PIRSF" id="PIRSF000190">
    <property type="entry name" value="Pyd_amn-ph_oxd"/>
    <property type="match status" value="1"/>
</dbReference>
<dbReference type="SUPFAM" id="SSF50475">
    <property type="entry name" value="FMN-binding split barrel"/>
    <property type="match status" value="1"/>
</dbReference>
<dbReference type="PROSITE" id="PS01064">
    <property type="entry name" value="PYRIDOX_OXIDASE"/>
    <property type="match status" value="1"/>
</dbReference>
<proteinExistence type="inferred from homology"/>
<comment type="function">
    <text evidence="1">Catalyzes the oxidation of either pyridoxine 5'-phosphate (PNP) or pyridoxamine 5'-phosphate (PMP) into pyridoxal 5'-phosphate (PLP).</text>
</comment>
<comment type="catalytic activity">
    <reaction evidence="1">
        <text>pyridoxamine 5'-phosphate + O2 + H2O = pyridoxal 5'-phosphate + H2O2 + NH4(+)</text>
        <dbReference type="Rhea" id="RHEA:15817"/>
        <dbReference type="ChEBI" id="CHEBI:15377"/>
        <dbReference type="ChEBI" id="CHEBI:15379"/>
        <dbReference type="ChEBI" id="CHEBI:16240"/>
        <dbReference type="ChEBI" id="CHEBI:28938"/>
        <dbReference type="ChEBI" id="CHEBI:58451"/>
        <dbReference type="ChEBI" id="CHEBI:597326"/>
        <dbReference type="EC" id="1.4.3.5"/>
    </reaction>
</comment>
<comment type="catalytic activity">
    <reaction evidence="1">
        <text>pyridoxine 5'-phosphate + O2 = pyridoxal 5'-phosphate + H2O2</text>
        <dbReference type="Rhea" id="RHEA:15149"/>
        <dbReference type="ChEBI" id="CHEBI:15379"/>
        <dbReference type="ChEBI" id="CHEBI:16240"/>
        <dbReference type="ChEBI" id="CHEBI:58589"/>
        <dbReference type="ChEBI" id="CHEBI:597326"/>
        <dbReference type="EC" id="1.4.3.5"/>
    </reaction>
</comment>
<comment type="cofactor">
    <cofactor evidence="1">
        <name>FMN</name>
        <dbReference type="ChEBI" id="CHEBI:58210"/>
    </cofactor>
    <text evidence="1">Binds 1 FMN per subunit.</text>
</comment>
<comment type="pathway">
    <text evidence="1">Cofactor metabolism; pyridoxal 5'-phosphate salvage; pyridoxal 5'-phosphate from pyridoxamine 5'-phosphate: step 1/1.</text>
</comment>
<comment type="pathway">
    <text evidence="1">Cofactor metabolism; pyridoxal 5'-phosphate salvage; pyridoxal 5'-phosphate from pyridoxine 5'-phosphate: step 1/1.</text>
</comment>
<comment type="subunit">
    <text evidence="1">Homodimer.</text>
</comment>
<comment type="similarity">
    <text evidence="1">Belongs to the pyridoxamine 5'-phosphate oxidase family.</text>
</comment>
<evidence type="ECO:0000255" key="1">
    <source>
        <dbReference type="HAMAP-Rule" id="MF_01629"/>
    </source>
</evidence>
<feature type="chain" id="PRO_1000069691" description="Pyridoxine/pyridoxamine 5'-phosphate oxidase">
    <location>
        <begin position="1"/>
        <end position="218"/>
    </location>
</feature>
<feature type="binding site" evidence="1">
    <location>
        <begin position="14"/>
        <end position="17"/>
    </location>
    <ligand>
        <name>substrate</name>
    </ligand>
</feature>
<feature type="binding site" evidence="1">
    <location>
        <begin position="67"/>
        <end position="72"/>
    </location>
    <ligand>
        <name>FMN</name>
        <dbReference type="ChEBI" id="CHEBI:58210"/>
    </ligand>
</feature>
<feature type="binding site" evidence="1">
    <location>
        <position position="72"/>
    </location>
    <ligand>
        <name>substrate</name>
    </ligand>
</feature>
<feature type="binding site" evidence="1">
    <location>
        <begin position="82"/>
        <end position="83"/>
    </location>
    <ligand>
        <name>FMN</name>
        <dbReference type="ChEBI" id="CHEBI:58210"/>
    </ligand>
</feature>
<feature type="binding site" evidence="1">
    <location>
        <position position="88"/>
    </location>
    <ligand>
        <name>FMN</name>
        <dbReference type="ChEBI" id="CHEBI:58210"/>
    </ligand>
</feature>
<feature type="binding site" evidence="1">
    <location>
        <position position="89"/>
    </location>
    <ligand>
        <name>FMN</name>
        <dbReference type="ChEBI" id="CHEBI:58210"/>
    </ligand>
</feature>
<feature type="binding site" evidence="1">
    <location>
        <position position="111"/>
    </location>
    <ligand>
        <name>FMN</name>
        <dbReference type="ChEBI" id="CHEBI:58210"/>
    </ligand>
</feature>
<feature type="binding site" evidence="1">
    <location>
        <position position="129"/>
    </location>
    <ligand>
        <name>substrate</name>
    </ligand>
</feature>
<feature type="binding site" evidence="1">
    <location>
        <position position="133"/>
    </location>
    <ligand>
        <name>substrate</name>
    </ligand>
</feature>
<feature type="binding site" evidence="1">
    <location>
        <position position="137"/>
    </location>
    <ligand>
        <name>substrate</name>
    </ligand>
</feature>
<feature type="binding site" evidence="1">
    <location>
        <begin position="146"/>
        <end position="147"/>
    </location>
    <ligand>
        <name>FMN</name>
        <dbReference type="ChEBI" id="CHEBI:58210"/>
    </ligand>
</feature>
<feature type="binding site" evidence="1">
    <location>
        <position position="191"/>
    </location>
    <ligand>
        <name>FMN</name>
        <dbReference type="ChEBI" id="CHEBI:58210"/>
    </ligand>
</feature>
<feature type="binding site" evidence="1">
    <location>
        <begin position="197"/>
        <end position="199"/>
    </location>
    <ligand>
        <name>substrate</name>
    </ligand>
</feature>
<feature type="binding site" evidence="1">
    <location>
        <position position="201"/>
    </location>
    <ligand>
        <name>FMN</name>
        <dbReference type="ChEBI" id="CHEBI:58210"/>
    </ligand>
</feature>
<protein>
    <recommendedName>
        <fullName evidence="1">Pyridoxine/pyridoxamine 5'-phosphate oxidase</fullName>
        <ecNumber evidence="1">1.4.3.5</ecNumber>
    </recommendedName>
    <alternativeName>
        <fullName evidence="1">PNP/PMP oxidase</fullName>
        <shortName evidence="1">PNPOx</shortName>
    </alternativeName>
    <alternativeName>
        <fullName evidence="1">Pyridoxal 5'-phosphate synthase</fullName>
    </alternativeName>
</protein>
<name>PDXH_ECO24</name>
<accession>A7ZMA0</accession>
<organism>
    <name type="scientific">Escherichia coli O139:H28 (strain E24377A / ETEC)</name>
    <dbReference type="NCBI Taxonomy" id="331111"/>
    <lineage>
        <taxon>Bacteria</taxon>
        <taxon>Pseudomonadati</taxon>
        <taxon>Pseudomonadota</taxon>
        <taxon>Gammaproteobacteria</taxon>
        <taxon>Enterobacterales</taxon>
        <taxon>Enterobacteriaceae</taxon>
        <taxon>Escherichia</taxon>
    </lineage>
</organism>
<gene>
    <name evidence="1" type="primary">pdxH</name>
    <name type="ordered locus">EcE24377A_1848</name>
</gene>
<keyword id="KW-0285">Flavoprotein</keyword>
<keyword id="KW-0288">FMN</keyword>
<keyword id="KW-0560">Oxidoreductase</keyword>
<keyword id="KW-0664">Pyridoxine biosynthesis</keyword>
<keyword id="KW-1185">Reference proteome</keyword>
<reference key="1">
    <citation type="journal article" date="2008" name="J. Bacteriol.">
        <title>The pangenome structure of Escherichia coli: comparative genomic analysis of E. coli commensal and pathogenic isolates.</title>
        <authorList>
            <person name="Rasko D.A."/>
            <person name="Rosovitz M.J."/>
            <person name="Myers G.S.A."/>
            <person name="Mongodin E.F."/>
            <person name="Fricke W.F."/>
            <person name="Gajer P."/>
            <person name="Crabtree J."/>
            <person name="Sebaihia M."/>
            <person name="Thomson N.R."/>
            <person name="Chaudhuri R."/>
            <person name="Henderson I.R."/>
            <person name="Sperandio V."/>
            <person name="Ravel J."/>
        </authorList>
    </citation>
    <scope>NUCLEOTIDE SEQUENCE [LARGE SCALE GENOMIC DNA]</scope>
    <source>
        <strain>E24377A / ETEC</strain>
    </source>
</reference>
<sequence>MSDNDELQQIAHLRREYTKGGLRRRDLPADPLTLFERWLSQACEAKLADPTAMVVATVDEHAQPYQRIVLLKHYDEKGMVFYTNLGSRKAHQIENNPRVSLLFPWHTLERQVMVIGKAERLSTLEVMKYFHSRPRDSQIGAWVSKQSSRISARGILESKFLELKQKFQQGEVPLPSFWGGFRISLEQIEFWQGGEHRLHDRFLYQRENDAWKIDRLAP</sequence>